<organism>
    <name type="scientific">Jasminum nudiflorum</name>
    <name type="common">Winter jasmine</name>
    <dbReference type="NCBI Taxonomy" id="126431"/>
    <lineage>
        <taxon>Eukaryota</taxon>
        <taxon>Viridiplantae</taxon>
        <taxon>Streptophyta</taxon>
        <taxon>Embryophyta</taxon>
        <taxon>Tracheophyta</taxon>
        <taxon>Spermatophyta</taxon>
        <taxon>Magnoliopsida</taxon>
        <taxon>eudicotyledons</taxon>
        <taxon>Gunneridae</taxon>
        <taxon>Pentapetalae</taxon>
        <taxon>asterids</taxon>
        <taxon>lamiids</taxon>
        <taxon>Lamiales</taxon>
        <taxon>Oleaceae</taxon>
        <taxon>Jasmineae</taxon>
        <taxon>Jasminum</taxon>
    </lineage>
</organism>
<protein>
    <recommendedName>
        <fullName evidence="1">ATP synthase subunit b, chloroplastic</fullName>
    </recommendedName>
    <alternativeName>
        <fullName evidence="1">ATP synthase F(0) sector subunit b</fullName>
    </alternativeName>
    <alternativeName>
        <fullName evidence="1">ATPase subunit I</fullName>
    </alternativeName>
</protein>
<sequence length="184" mass="20898">MKNVTDSFVSLGHWPSAGSFGWNTDILATNLINLSVVIGVLIFFGKGVLSDLLDNRKQRILNTIRNSEELRGGAIEQLEKARARLRKMEMEADQFRVNGYSEIERDKWNLINSTSKTLEQFENFKNETIQFEQQRAINQVRQRVFQQALQGALGTLNSCLNKELHLRTISANIGILGAMKEITD</sequence>
<dbReference type="EMBL" id="DQ673255">
    <property type="protein sequence ID" value="ABG74614.1"/>
    <property type="molecule type" value="Genomic_DNA"/>
</dbReference>
<dbReference type="RefSeq" id="YP_778476.1">
    <property type="nucleotide sequence ID" value="NC_008407.1"/>
</dbReference>
<dbReference type="SMR" id="Q06RE5"/>
<dbReference type="GeneID" id="4319785"/>
<dbReference type="GO" id="GO:0009535">
    <property type="term" value="C:chloroplast thylakoid membrane"/>
    <property type="evidence" value="ECO:0007669"/>
    <property type="project" value="UniProtKB-SubCell"/>
</dbReference>
<dbReference type="GO" id="GO:0045259">
    <property type="term" value="C:proton-transporting ATP synthase complex"/>
    <property type="evidence" value="ECO:0007669"/>
    <property type="project" value="UniProtKB-KW"/>
</dbReference>
<dbReference type="GO" id="GO:0046933">
    <property type="term" value="F:proton-transporting ATP synthase activity, rotational mechanism"/>
    <property type="evidence" value="ECO:0007669"/>
    <property type="project" value="UniProtKB-UniRule"/>
</dbReference>
<dbReference type="CDD" id="cd06503">
    <property type="entry name" value="ATP-synt_Fo_b"/>
    <property type="match status" value="1"/>
</dbReference>
<dbReference type="HAMAP" id="MF_01398">
    <property type="entry name" value="ATP_synth_b_bprime"/>
    <property type="match status" value="1"/>
</dbReference>
<dbReference type="InterPro" id="IPR002146">
    <property type="entry name" value="ATP_synth_b/b'su_bac/chlpt"/>
</dbReference>
<dbReference type="PANTHER" id="PTHR34264">
    <property type="entry name" value="ATP SYNTHASE SUBUNIT B, CHLOROPLASTIC"/>
    <property type="match status" value="1"/>
</dbReference>
<dbReference type="PANTHER" id="PTHR34264:SF3">
    <property type="entry name" value="ATP SYNTHASE SUBUNIT B, CHLOROPLASTIC"/>
    <property type="match status" value="1"/>
</dbReference>
<dbReference type="Pfam" id="PF00430">
    <property type="entry name" value="ATP-synt_B"/>
    <property type="match status" value="1"/>
</dbReference>
<gene>
    <name evidence="1" type="primary">atpF</name>
    <name type="ORF">JNC0132</name>
</gene>
<accession>Q06RE5</accession>
<reference key="1">
    <citation type="journal article" date="2007" name="Mol. Biol. Evol.">
        <title>Gene relocations within chloroplast genomes of Jasminum and Menodora (Oleaceae) are due to multiple, overlapping inversions.</title>
        <authorList>
            <person name="Lee H.-L."/>
            <person name="Jansen R.K."/>
            <person name="Chumley T.W."/>
            <person name="Kim K.-J."/>
        </authorList>
    </citation>
    <scope>NUCLEOTIDE SEQUENCE [LARGE SCALE GENOMIC DNA]</scope>
</reference>
<geneLocation type="chloroplast"/>
<comment type="function">
    <text evidence="1">F(1)F(0) ATP synthase produces ATP from ADP in the presence of a proton or sodium gradient. F-type ATPases consist of two structural domains, F(1) containing the extramembraneous catalytic core and F(0) containing the membrane proton channel, linked together by a central stalk and a peripheral stalk. During catalysis, ATP synthesis in the catalytic domain of F(1) is coupled via a rotary mechanism of the central stalk subunits to proton translocation.</text>
</comment>
<comment type="function">
    <text evidence="1">Component of the F(0) channel, it forms part of the peripheral stalk, linking F(1) to F(0).</text>
</comment>
<comment type="subunit">
    <text evidence="1">F-type ATPases have 2 components, F(1) - the catalytic core - and F(0) - the membrane proton channel. F(1) has five subunits: alpha(3), beta(3), gamma(1), delta(1), epsilon(1). F(0) has four main subunits: a(1), b(1), b'(1) and c(10-14). The alpha and beta chains form an alternating ring which encloses part of the gamma chain. F(1) is attached to F(0) by a central stalk formed by the gamma and epsilon chains, while a peripheral stalk is formed by the delta, b and b' chains.</text>
</comment>
<comment type="subcellular location">
    <subcellularLocation>
        <location evidence="1">Plastid</location>
        <location evidence="1">Chloroplast thylakoid membrane</location>
        <topology evidence="1">Single-pass membrane protein</topology>
    </subcellularLocation>
</comment>
<comment type="miscellaneous">
    <text>In plastids the F-type ATPase is also known as CF(1)CF(0).</text>
</comment>
<comment type="similarity">
    <text evidence="1">Belongs to the ATPase B chain family.</text>
</comment>
<proteinExistence type="inferred from homology"/>
<name>ATPF_JASNU</name>
<feature type="chain" id="PRO_0000368943" description="ATP synthase subunit b, chloroplastic">
    <location>
        <begin position="1"/>
        <end position="184"/>
    </location>
</feature>
<feature type="transmembrane region" description="Helical" evidence="1">
    <location>
        <begin position="27"/>
        <end position="49"/>
    </location>
</feature>
<keyword id="KW-0066">ATP synthesis</keyword>
<keyword id="KW-0138">CF(0)</keyword>
<keyword id="KW-0150">Chloroplast</keyword>
<keyword id="KW-0375">Hydrogen ion transport</keyword>
<keyword id="KW-0406">Ion transport</keyword>
<keyword id="KW-0472">Membrane</keyword>
<keyword id="KW-0934">Plastid</keyword>
<keyword id="KW-0793">Thylakoid</keyword>
<keyword id="KW-0812">Transmembrane</keyword>
<keyword id="KW-1133">Transmembrane helix</keyword>
<keyword id="KW-0813">Transport</keyword>
<evidence type="ECO:0000255" key="1">
    <source>
        <dbReference type="HAMAP-Rule" id="MF_01398"/>
    </source>
</evidence>